<organism>
    <name type="scientific">Bradyrhizobium diazoefficiens (strain JCM 10833 / BCRC 13528 / IAM 13628 / NBRC 14792 / USDA 110)</name>
    <dbReference type="NCBI Taxonomy" id="224911"/>
    <lineage>
        <taxon>Bacteria</taxon>
        <taxon>Pseudomonadati</taxon>
        <taxon>Pseudomonadota</taxon>
        <taxon>Alphaproteobacteria</taxon>
        <taxon>Hyphomicrobiales</taxon>
        <taxon>Nitrobacteraceae</taxon>
        <taxon>Bradyrhizobium</taxon>
    </lineage>
</organism>
<gene>
    <name evidence="1" type="primary">murD</name>
    <name type="ordered locus">bll6604</name>
</gene>
<comment type="function">
    <text evidence="1">Cell wall formation. Catalyzes the addition of glutamate to the nucleotide precursor UDP-N-acetylmuramoyl-L-alanine (UMA).</text>
</comment>
<comment type="catalytic activity">
    <reaction evidence="1">
        <text>UDP-N-acetyl-alpha-D-muramoyl-L-alanine + D-glutamate + ATP = UDP-N-acetyl-alpha-D-muramoyl-L-alanyl-D-glutamate + ADP + phosphate + H(+)</text>
        <dbReference type="Rhea" id="RHEA:16429"/>
        <dbReference type="ChEBI" id="CHEBI:15378"/>
        <dbReference type="ChEBI" id="CHEBI:29986"/>
        <dbReference type="ChEBI" id="CHEBI:30616"/>
        <dbReference type="ChEBI" id="CHEBI:43474"/>
        <dbReference type="ChEBI" id="CHEBI:83898"/>
        <dbReference type="ChEBI" id="CHEBI:83900"/>
        <dbReference type="ChEBI" id="CHEBI:456216"/>
        <dbReference type="EC" id="6.3.2.9"/>
    </reaction>
</comment>
<comment type="pathway">
    <text evidence="1">Cell wall biogenesis; peptidoglycan biosynthesis.</text>
</comment>
<comment type="subcellular location">
    <subcellularLocation>
        <location evidence="1">Cytoplasm</location>
    </subcellularLocation>
</comment>
<comment type="similarity">
    <text evidence="1">Belongs to the MurCDEF family.</text>
</comment>
<keyword id="KW-0067">ATP-binding</keyword>
<keyword id="KW-0131">Cell cycle</keyword>
<keyword id="KW-0132">Cell division</keyword>
<keyword id="KW-0133">Cell shape</keyword>
<keyword id="KW-0961">Cell wall biogenesis/degradation</keyword>
<keyword id="KW-0963">Cytoplasm</keyword>
<keyword id="KW-0436">Ligase</keyword>
<keyword id="KW-0547">Nucleotide-binding</keyword>
<keyword id="KW-0573">Peptidoglycan synthesis</keyword>
<keyword id="KW-1185">Reference proteome</keyword>
<name>MURD_BRADU</name>
<accession>Q89FU5</accession>
<evidence type="ECO:0000255" key="1">
    <source>
        <dbReference type="HAMAP-Rule" id="MF_00639"/>
    </source>
</evidence>
<dbReference type="EC" id="6.3.2.9" evidence="1"/>
<dbReference type="EMBL" id="BA000040">
    <property type="protein sequence ID" value="BAC51869.1"/>
    <property type="molecule type" value="Genomic_DNA"/>
</dbReference>
<dbReference type="RefSeq" id="NP_773244.1">
    <property type="nucleotide sequence ID" value="NC_004463.1"/>
</dbReference>
<dbReference type="RefSeq" id="WP_011089344.1">
    <property type="nucleotide sequence ID" value="NC_004463.1"/>
</dbReference>
<dbReference type="SMR" id="Q89FU5"/>
<dbReference type="FunCoup" id="Q89FU5">
    <property type="interactions" value="615"/>
</dbReference>
<dbReference type="STRING" id="224911.AAV28_30600"/>
<dbReference type="EnsemblBacteria" id="BAC51869">
    <property type="protein sequence ID" value="BAC51869"/>
    <property type="gene ID" value="BAC51869"/>
</dbReference>
<dbReference type="GeneID" id="46493576"/>
<dbReference type="KEGG" id="bja:bll6604"/>
<dbReference type="PATRIC" id="fig|224911.44.peg.6616"/>
<dbReference type="eggNOG" id="COG0771">
    <property type="taxonomic scope" value="Bacteria"/>
</dbReference>
<dbReference type="HOGENOM" id="CLU_032540_3_0_5"/>
<dbReference type="InParanoid" id="Q89FU5"/>
<dbReference type="OrthoDB" id="9809796at2"/>
<dbReference type="PhylomeDB" id="Q89FU5"/>
<dbReference type="UniPathway" id="UPA00219"/>
<dbReference type="Proteomes" id="UP000002526">
    <property type="component" value="Chromosome"/>
</dbReference>
<dbReference type="GO" id="GO:0005737">
    <property type="term" value="C:cytoplasm"/>
    <property type="evidence" value="ECO:0007669"/>
    <property type="project" value="UniProtKB-SubCell"/>
</dbReference>
<dbReference type="GO" id="GO:0005524">
    <property type="term" value="F:ATP binding"/>
    <property type="evidence" value="ECO:0007669"/>
    <property type="project" value="UniProtKB-UniRule"/>
</dbReference>
<dbReference type="GO" id="GO:0008764">
    <property type="term" value="F:UDP-N-acetylmuramoylalanine-D-glutamate ligase activity"/>
    <property type="evidence" value="ECO:0007669"/>
    <property type="project" value="UniProtKB-UniRule"/>
</dbReference>
<dbReference type="GO" id="GO:0051301">
    <property type="term" value="P:cell division"/>
    <property type="evidence" value="ECO:0007669"/>
    <property type="project" value="UniProtKB-KW"/>
</dbReference>
<dbReference type="GO" id="GO:0071555">
    <property type="term" value="P:cell wall organization"/>
    <property type="evidence" value="ECO:0007669"/>
    <property type="project" value="UniProtKB-KW"/>
</dbReference>
<dbReference type="GO" id="GO:0009252">
    <property type="term" value="P:peptidoglycan biosynthetic process"/>
    <property type="evidence" value="ECO:0007669"/>
    <property type="project" value="UniProtKB-UniRule"/>
</dbReference>
<dbReference type="GO" id="GO:0008360">
    <property type="term" value="P:regulation of cell shape"/>
    <property type="evidence" value="ECO:0007669"/>
    <property type="project" value="UniProtKB-KW"/>
</dbReference>
<dbReference type="Gene3D" id="3.90.190.20">
    <property type="entry name" value="Mur ligase, C-terminal domain"/>
    <property type="match status" value="1"/>
</dbReference>
<dbReference type="Gene3D" id="3.40.1190.10">
    <property type="entry name" value="Mur-like, catalytic domain"/>
    <property type="match status" value="1"/>
</dbReference>
<dbReference type="Gene3D" id="3.40.50.720">
    <property type="entry name" value="NAD(P)-binding Rossmann-like Domain"/>
    <property type="match status" value="1"/>
</dbReference>
<dbReference type="HAMAP" id="MF_00639">
    <property type="entry name" value="MurD"/>
    <property type="match status" value="1"/>
</dbReference>
<dbReference type="InterPro" id="IPR013116">
    <property type="entry name" value="KARI_N"/>
</dbReference>
<dbReference type="InterPro" id="IPR036565">
    <property type="entry name" value="Mur-like_cat_sf"/>
</dbReference>
<dbReference type="InterPro" id="IPR004101">
    <property type="entry name" value="Mur_ligase_C"/>
</dbReference>
<dbReference type="InterPro" id="IPR036615">
    <property type="entry name" value="Mur_ligase_C_dom_sf"/>
</dbReference>
<dbReference type="InterPro" id="IPR013221">
    <property type="entry name" value="Mur_ligase_cen"/>
</dbReference>
<dbReference type="InterPro" id="IPR005762">
    <property type="entry name" value="MurD"/>
</dbReference>
<dbReference type="NCBIfam" id="TIGR01087">
    <property type="entry name" value="murD"/>
    <property type="match status" value="1"/>
</dbReference>
<dbReference type="PANTHER" id="PTHR43692">
    <property type="entry name" value="UDP-N-ACETYLMURAMOYLALANINE--D-GLUTAMATE LIGASE"/>
    <property type="match status" value="1"/>
</dbReference>
<dbReference type="PANTHER" id="PTHR43692:SF1">
    <property type="entry name" value="UDP-N-ACETYLMURAMOYLALANINE--D-GLUTAMATE LIGASE"/>
    <property type="match status" value="1"/>
</dbReference>
<dbReference type="Pfam" id="PF07991">
    <property type="entry name" value="KARI_N"/>
    <property type="match status" value="1"/>
</dbReference>
<dbReference type="Pfam" id="PF02875">
    <property type="entry name" value="Mur_ligase_C"/>
    <property type="match status" value="1"/>
</dbReference>
<dbReference type="Pfam" id="PF08245">
    <property type="entry name" value="Mur_ligase_M"/>
    <property type="match status" value="1"/>
</dbReference>
<dbReference type="SUPFAM" id="SSF51984">
    <property type="entry name" value="MurCD N-terminal domain"/>
    <property type="match status" value="1"/>
</dbReference>
<dbReference type="SUPFAM" id="SSF53623">
    <property type="entry name" value="MurD-like peptide ligases, catalytic domain"/>
    <property type="match status" value="1"/>
</dbReference>
<dbReference type="SUPFAM" id="SSF53244">
    <property type="entry name" value="MurD-like peptide ligases, peptide-binding domain"/>
    <property type="match status" value="1"/>
</dbReference>
<protein>
    <recommendedName>
        <fullName evidence="1">UDP-N-acetylmuramoylalanine--D-glutamate ligase</fullName>
        <ecNumber evidence="1">6.3.2.9</ecNumber>
    </recommendedName>
    <alternativeName>
        <fullName evidence="1">D-glutamic acid-adding enzyme</fullName>
    </alternativeName>
    <alternativeName>
        <fullName evidence="1">UDP-N-acetylmuramoyl-L-alanyl-D-glutamate synthetase</fullName>
    </alternativeName>
</protein>
<proteinExistence type="inferred from homology"/>
<reference key="1">
    <citation type="journal article" date="2002" name="DNA Res.">
        <title>Complete genomic sequence of nitrogen-fixing symbiotic bacterium Bradyrhizobium japonicum USDA110.</title>
        <authorList>
            <person name="Kaneko T."/>
            <person name="Nakamura Y."/>
            <person name="Sato S."/>
            <person name="Minamisawa K."/>
            <person name="Uchiumi T."/>
            <person name="Sasamoto S."/>
            <person name="Watanabe A."/>
            <person name="Idesawa K."/>
            <person name="Iriguchi M."/>
            <person name="Kawashima K."/>
            <person name="Kohara M."/>
            <person name="Matsumoto M."/>
            <person name="Shimpo S."/>
            <person name="Tsuruoka H."/>
            <person name="Wada T."/>
            <person name="Yamada M."/>
            <person name="Tabata S."/>
        </authorList>
    </citation>
    <scope>NUCLEOTIDE SEQUENCE [LARGE SCALE GENOMIC DNA]</scope>
    <source>
        <strain>JCM 10833 / BCRC 13528 / IAM 13628 / NBRC 14792 / USDA 110</strain>
    </source>
</reference>
<sequence>MIPVTSFAGKTVAVFGLGGSGLASCHALKAGGAEVIAADDNAENVAKAAQAGFITADLRDVSWAGFAALVLAPGVPLTHPVPHWSVLKAREAGVEVIGDIELFCRERRRHAPDAPFVAITGTNGKSTTTALIAHLTKVAGYDTQMGGNIGTAILSLEPPRTGRVHVIEMSSYQIDLTPSLDPSVGILLNVSEDHIDRHGTIAHYAAVKERLVAGVQAGGTSIVGVDDGYCRDIADRLDRAGKNVVRISVKNPLASGIHVEHGTIVRTAGGARSEVAKLGGIGSLRGLHNAQNAACAAAAALAMGISQDVLQDGLRSFPGLAHRMEQVGRRGNVLFVNDSKGTNADATAHALSSFADIFWIAGGKPKAGGITSLTGFFPRIRKAYLIGEAAQEFSGTLGTQVAHEISQTLDVAVEHAARDAEASGLTDAVVLLSPACASFDQYRNFEIRGTKFRELVQALPGVKPVV</sequence>
<feature type="chain" id="PRO_0000108980" description="UDP-N-acetylmuramoylalanine--D-glutamate ligase">
    <location>
        <begin position="1"/>
        <end position="466"/>
    </location>
</feature>
<feature type="binding site" evidence="1">
    <location>
        <begin position="121"/>
        <end position="127"/>
    </location>
    <ligand>
        <name>ATP</name>
        <dbReference type="ChEBI" id="CHEBI:30616"/>
    </ligand>
</feature>